<organismHost>
    <name type="scientific">Bos taurus</name>
    <name type="common">Bovine</name>
    <dbReference type="NCBI Taxonomy" id="9913"/>
</organismHost>
<organismHost>
    <name type="scientific">Felis catus</name>
    <name type="common">Cat</name>
    <name type="synonym">Felis silvestris catus</name>
    <dbReference type="NCBI Taxonomy" id="9685"/>
</organismHost>
<organismHost>
    <name type="scientific">Homo sapiens</name>
    <name type="common">Human</name>
    <dbReference type="NCBI Taxonomy" id="9606"/>
</organismHost>
<organismHost>
    <name type="scientific">Loxodonta africana</name>
    <name type="common">African elephant</name>
    <dbReference type="NCBI Taxonomy" id="9785"/>
</organismHost>
<organismHost>
    <name type="scientific">Microtus agrestis</name>
    <name type="common">Short-tailed field vole</name>
    <dbReference type="NCBI Taxonomy" id="29092"/>
</organismHost>
<organismHost>
    <name type="scientific">Mus musculus</name>
    <name type="common">Mouse</name>
    <dbReference type="NCBI Taxonomy" id="10090"/>
</organismHost>
<organismHost>
    <name type="scientific">Myodes glareolus</name>
    <name type="common">Bank vole</name>
    <name type="synonym">Clethrionomys glareolus</name>
    <dbReference type="NCBI Taxonomy" id="447135"/>
</organismHost>
<accession>Q8QMZ9</accession>
<evidence type="ECO:0000250" key="1">
    <source>
        <dbReference type="UniProtKB" id="P23371"/>
    </source>
</evidence>
<evidence type="ECO:0000255" key="2">
    <source>
        <dbReference type="PIRSR" id="PIRSR015693-50"/>
    </source>
</evidence>
<evidence type="ECO:0000305" key="3"/>
<gene>
    <name type="primary">OPG063</name>
    <name type="synonym">PAPL</name>
    <name type="ordered locus">CPXV067</name>
</gene>
<organism>
    <name type="scientific">Cowpox virus (strain Brighton Red)</name>
    <name type="common">CPV</name>
    <dbReference type="NCBI Taxonomy" id="265872"/>
    <lineage>
        <taxon>Viruses</taxon>
        <taxon>Varidnaviria</taxon>
        <taxon>Bamfordvirae</taxon>
        <taxon>Nucleocytoviricota</taxon>
        <taxon>Pokkesviricetes</taxon>
        <taxon>Chitovirales</taxon>
        <taxon>Poxviridae</taxon>
        <taxon>Chordopoxvirinae</taxon>
        <taxon>Orthopoxvirus</taxon>
        <taxon>Cowpox virus</taxon>
    </lineage>
</organism>
<proteinExistence type="inferred from homology"/>
<protein>
    <recommendedName>
        <fullName>Poly(A) polymerase catalytic subunit</fullName>
        <ecNumber>2.7.7.19</ecNumber>
    </recommendedName>
    <alternativeName>
        <fullName>Poly(A) polymerase large subunit</fullName>
        <shortName>PAP-L</shortName>
    </alternativeName>
</protein>
<keyword id="KW-0067">ATP-binding</keyword>
<keyword id="KW-0106">Calcium</keyword>
<keyword id="KW-0244">Early protein</keyword>
<keyword id="KW-0479">Metal-binding</keyword>
<keyword id="KW-0507">mRNA processing</keyword>
<keyword id="KW-0547">Nucleotide-binding</keyword>
<keyword id="KW-0804">Transcription</keyword>
<keyword id="KW-0808">Transferase</keyword>
<comment type="function">
    <text evidence="1">Polymerase that creates the 3'-poly(A) tail of mRNA's.</text>
</comment>
<comment type="catalytic activity">
    <reaction evidence="1">
        <text>RNA(n) + ATP = RNA(n)-3'-adenine ribonucleotide + diphosphate</text>
        <dbReference type="Rhea" id="RHEA:11332"/>
        <dbReference type="Rhea" id="RHEA-COMP:14527"/>
        <dbReference type="Rhea" id="RHEA-COMP:17347"/>
        <dbReference type="ChEBI" id="CHEBI:30616"/>
        <dbReference type="ChEBI" id="CHEBI:33019"/>
        <dbReference type="ChEBI" id="CHEBI:140395"/>
        <dbReference type="ChEBI" id="CHEBI:173115"/>
        <dbReference type="EC" id="2.7.7.19"/>
    </reaction>
</comment>
<comment type="subunit">
    <text evidence="1">Heterodimer of a large (catalytic) subunit and a small (regulatory) subunit.</text>
</comment>
<comment type="induction">
    <text evidence="1">Expressed in the early phase of the viral replicative cycle.</text>
</comment>
<comment type="similarity">
    <text evidence="3">Belongs to the poxviridae poly(A) polymerase catalytic subunit family.</text>
</comment>
<sequence length="479" mass="55519">MNRNPDQNTLPNITLKIIETYLGRIPSVNEYHMLKLQARNIQKITVFNKDIFVSLVKKNKKRFFSDVDTSASEIKDRILSYFSKQTQTYNIGKLFTIIELQSVLVTTYTDILGVLTIKAPNVISSKISYNVTSMEELARDMLNSMNVAVIDKAKVMGRHNVSSLVKNVNKLMEEYLRRHNKSCICYGSYSLYLINPNIRYGDIDILQTNSRTFLIDLAFLIKFITGNNIILSKIPYLRNYMVIKDENDNHIIDSFNIRQDTMNVVPKIFIDNIYIVDPTFQLLNMIKMFSQIDRLEDLSKDPEKFNARMATMLEYVRYTHGIVFDGTRNNMPMKCIIDENNRIVTVTTKDYFSFKKCLVYLDENVLSSDILDLNADTSCDFESVTNSVYLIHDNIMYTYFSNTILLSDKGKVHEISARGLCAHILLYQMLTSGEYKQCLSDLLNSMMNRDKIPIYSHTERDKKPGRHGFINIEKDIIVF</sequence>
<dbReference type="EC" id="2.7.7.19"/>
<dbReference type="EMBL" id="AF482758">
    <property type="protein sequence ID" value="AAM13512.1"/>
    <property type="molecule type" value="Genomic_DNA"/>
</dbReference>
<dbReference type="SMR" id="Q8QMZ9"/>
<dbReference type="KEGG" id="vg:1485943"/>
<dbReference type="Proteomes" id="UP000152733">
    <property type="component" value="Segment"/>
</dbReference>
<dbReference type="GO" id="GO:0005524">
    <property type="term" value="F:ATP binding"/>
    <property type="evidence" value="ECO:0007669"/>
    <property type="project" value="UniProtKB-KW"/>
</dbReference>
<dbReference type="GO" id="GO:0046872">
    <property type="term" value="F:metal ion binding"/>
    <property type="evidence" value="ECO:0007669"/>
    <property type="project" value="UniProtKB-KW"/>
</dbReference>
<dbReference type="GO" id="GO:1990817">
    <property type="term" value="F:poly(A) RNA polymerase activity"/>
    <property type="evidence" value="ECO:0007669"/>
    <property type="project" value="UniProtKB-EC"/>
</dbReference>
<dbReference type="GO" id="GO:0006397">
    <property type="term" value="P:mRNA processing"/>
    <property type="evidence" value="ECO:0007669"/>
    <property type="project" value="UniProtKB-KW"/>
</dbReference>
<dbReference type="CDD" id="cd20919">
    <property type="entry name" value="polyA_pol_Pox"/>
    <property type="match status" value="1"/>
</dbReference>
<dbReference type="Gene3D" id="1.20.1270.320">
    <property type="entry name" value="Poxvirus poly(A) polymerase, N domain"/>
    <property type="match status" value="1"/>
</dbReference>
<dbReference type="Gene3D" id="3.30.460.60">
    <property type="entry name" value="Poxvirus poly(A) polymerase, nucleotidyltransferase domain"/>
    <property type="match status" value="1"/>
</dbReference>
<dbReference type="InterPro" id="IPR004976">
    <property type="entry name" value="PolyA_pol_cat_Poxvir"/>
</dbReference>
<dbReference type="InterPro" id="IPR037265">
    <property type="entry name" value="PolyA_pol_cat_sf"/>
</dbReference>
<dbReference type="InterPro" id="IPR024231">
    <property type="entry name" value="PolyA_pol_nucTrfase_Poxvir"/>
</dbReference>
<dbReference type="InterPro" id="IPR038419">
    <property type="entry name" value="PolyA_pol_nucTrfase_sf_Poxvir"/>
</dbReference>
<dbReference type="InterPro" id="IPR024397">
    <property type="entry name" value="Poxvirus_polyA_pol_cat_C"/>
</dbReference>
<dbReference type="InterPro" id="IPR024398">
    <property type="entry name" value="Poxvirus_polyA_pol_cat_N"/>
</dbReference>
<dbReference type="InterPro" id="IPR038337">
    <property type="entry name" value="Poxvirus_polyA_pol_cat_N_sf"/>
</dbReference>
<dbReference type="Pfam" id="PF03296">
    <property type="entry name" value="Pox_polyA_pol"/>
    <property type="match status" value="1"/>
</dbReference>
<dbReference type="Pfam" id="PF12629">
    <property type="entry name" value="Pox_polyA_pol_C"/>
    <property type="match status" value="1"/>
</dbReference>
<dbReference type="Pfam" id="PF12630">
    <property type="entry name" value="Pox_polyA_pol_N"/>
    <property type="match status" value="1"/>
</dbReference>
<dbReference type="PIRSF" id="PIRSF015693">
    <property type="entry name" value="VAC-48L_nuct"/>
    <property type="match status" value="1"/>
</dbReference>
<dbReference type="SUPFAM" id="SSF160957">
    <property type="entry name" value="Poly(A) polymerase catalytic subunit-like"/>
    <property type="match status" value="1"/>
</dbReference>
<reference key="1">
    <citation type="submission" date="2003-05" db="EMBL/GenBank/DDBJ databases">
        <authorList>
            <person name="Dietrich F.S."/>
            <person name="Ray C.A."/>
            <person name="Sharma D.A."/>
            <person name="Allen A."/>
            <person name="Pickup D.J."/>
        </authorList>
    </citation>
    <scope>NUCLEOTIDE SEQUENCE [LARGE SCALE GENOMIC DNA]</scope>
</reference>
<feature type="chain" id="PRO_0000308927" description="Poly(A) polymerase catalytic subunit">
    <location>
        <begin position="1"/>
        <end position="479"/>
    </location>
</feature>
<feature type="active site" evidence="2">
    <location>
        <position position="202"/>
    </location>
</feature>
<feature type="active site" evidence="2">
    <location>
        <position position="204"/>
    </location>
</feature>
<feature type="binding site" evidence="1">
    <location>
        <position position="202"/>
    </location>
    <ligand>
        <name>Ca(2+)</name>
        <dbReference type="ChEBI" id="CHEBI:29108"/>
        <label>1</label>
    </ligand>
</feature>
<feature type="binding site" evidence="1">
    <location>
        <position position="202"/>
    </location>
    <ligand>
        <name>Ca(2+)</name>
        <dbReference type="ChEBI" id="CHEBI:29108"/>
        <label>2</label>
    </ligand>
</feature>
<feature type="binding site" evidence="1">
    <location>
        <position position="204"/>
    </location>
    <ligand>
        <name>Ca(2+)</name>
        <dbReference type="ChEBI" id="CHEBI:29108"/>
        <label>1</label>
    </ligand>
</feature>
<feature type="binding site" evidence="1">
    <location>
        <position position="204"/>
    </location>
    <ligand>
        <name>Ca(2+)</name>
        <dbReference type="ChEBI" id="CHEBI:29108"/>
        <label>2</label>
    </ligand>
</feature>
<feature type="binding site" evidence="1">
    <location>
        <position position="253"/>
    </location>
    <ligand>
        <name>Ca(2+)</name>
        <dbReference type="ChEBI" id="CHEBI:29108"/>
        <label>2</label>
    </ligand>
</feature>
<name>PAP1_CWPXB</name>